<dbReference type="EMBL" id="CH954177">
    <property type="protein sequence ID" value="EDV58983.1"/>
    <property type="molecule type" value="Genomic_DNA"/>
</dbReference>
<dbReference type="SMR" id="B3N538"/>
<dbReference type="EnsemblMetazoa" id="FBtr0130415">
    <property type="protein sequence ID" value="FBpp0128907"/>
    <property type="gene ID" value="FBgn0102670"/>
</dbReference>
<dbReference type="EnsemblMetazoa" id="XM_001969888.3">
    <property type="protein sequence ID" value="XP_001969924.1"/>
    <property type="gene ID" value="LOC6542675"/>
</dbReference>
<dbReference type="GeneID" id="6542675"/>
<dbReference type="KEGG" id="der:6542675"/>
<dbReference type="eggNOG" id="KOG3692">
    <property type="taxonomic scope" value="Eukaryota"/>
</dbReference>
<dbReference type="HOGENOM" id="CLU_008116_0_0_1"/>
<dbReference type="OMA" id="HVCHIVV"/>
<dbReference type="OrthoDB" id="63589at2759"/>
<dbReference type="PhylomeDB" id="B3N538"/>
<dbReference type="Proteomes" id="UP000008711">
    <property type="component" value="Unassembled WGS sequence"/>
</dbReference>
<dbReference type="GO" id="GO:0000184">
    <property type="term" value="P:nuclear-transcribed mRNA catabolic process, nonsense-mediated decay"/>
    <property type="evidence" value="ECO:0000250"/>
    <property type="project" value="UniProtKB"/>
</dbReference>
<dbReference type="InterPro" id="IPR019354">
    <property type="entry name" value="SMG8-like"/>
</dbReference>
<dbReference type="PANTHER" id="PTHR13091">
    <property type="entry name" value="AMPLIFIED IN BREAST CANCER 2-RELATED"/>
    <property type="match status" value="1"/>
</dbReference>
<dbReference type="PANTHER" id="PTHR13091:SF0">
    <property type="entry name" value="NONSENSE-MEDIATED MRNA DECAY FACTOR SMG8"/>
    <property type="match status" value="1"/>
</dbReference>
<dbReference type="Pfam" id="PF10220">
    <property type="entry name" value="Smg8_Smg9"/>
    <property type="match status" value="1"/>
</dbReference>
<keyword id="KW-0866">Nonsense-mediated mRNA decay</keyword>
<proteinExistence type="inferred from homology"/>
<comment type="function">
    <text evidence="1">Involved in nonsense-mediated decay (NMD) of mRNAs containing premature stop codons. Probable component of kinase complex containing nonC and recruited to stalled ribosomes (By similarity).</text>
</comment>
<comment type="similarity">
    <text evidence="4">Belongs to the SMG8 family.</text>
</comment>
<organism>
    <name type="scientific">Drosophila erecta</name>
    <name type="common">Fruit fly</name>
    <dbReference type="NCBI Taxonomy" id="7220"/>
    <lineage>
        <taxon>Eukaryota</taxon>
        <taxon>Metazoa</taxon>
        <taxon>Ecdysozoa</taxon>
        <taxon>Arthropoda</taxon>
        <taxon>Hexapoda</taxon>
        <taxon>Insecta</taxon>
        <taxon>Pterygota</taxon>
        <taxon>Neoptera</taxon>
        <taxon>Endopterygota</taxon>
        <taxon>Diptera</taxon>
        <taxon>Brachycera</taxon>
        <taxon>Muscomorpha</taxon>
        <taxon>Ephydroidea</taxon>
        <taxon>Drosophilidae</taxon>
        <taxon>Drosophila</taxon>
        <taxon>Sophophora</taxon>
    </lineage>
</organism>
<sequence>MMKDYYTWTYPDIPEDVAQKLQQLKNSLVVVGIVGRSKCDQANKMQAFGMEPPIEHTAKDGQVQCYYKPGTSSLLLHFETTYDEAILGQMIDVCMEDVDTPFDFDSFYERMRCRFVRMMLLALHACHIVVYVETGPTFDPTLVTVFQLLKFAREQHLMQFLPQMLRETPAARMSEKTRLCAPRILFLFENFPRDEPKTRECVSAYEFQTEDCIYELLRHHTIVTNSSSTSLVALPNNKQFVFFNAHEQLHEDKLLKAIECLNQAMYKPDAKEEEEDLEILELAPFDGFVKPYNLPVDEKELEKQQYKKDHTVWHFLQRHVQDALLGCFDEGSFKQHSQHGQFQLLNIQEWHDYMATLHKLLVENAKDPNHETSNEEYKLFLKCFDESLNYEKKFWTHLCELGLKKGIAAYKNAAPANYGSATHRQLLADATVAFEEEGRGPQAKAALAKLAAICQKYWQDGRQQCEQLSLRSHPCTLPKNLPHEKHNSAVIHISSCNCGRTQGRREDPFSMRQANYEFYEHIAQMCNLCVKVKHYKFPVFEPSVSDYRAAAFEAAFPLLHTAKSGARQGEEGDDEPEDEVVQEQQQPVEEQRQNTASNGCSQPLSPTFGSDLNMSIAGFGASLNESQASSEQLSNSEQNTSSSGTSSADTENELVVELQEPAKKETREDAGPADALPTSTTEYLPGLVHTVSNFGLLPLFPSWSLACVGPSSIYSHNTGLQEHFQSGFLSGANFLLPWDVQLRLVHAPKQQHHTHHQQQHPGKKQQRWKKQGDRLSLKIFVGMEYECSRGHRFMMCAPDRVLRGGADIERDTCSKVVHNNMPLYYPCPCRSQTSYLAQLMRIHVVTPKAPVNIIVDPKVCVGKEKYTFTLGSIVPPRLSQSAYWIIRLPYIYQGDDVIIAPPEKLEPDDPLAGGYLLPGMFGVAETDATQDLNEPGRMGASAAEDFTRI</sequence>
<accession>B3N538</accession>
<gene>
    <name type="ORF">GG10361</name>
</gene>
<protein>
    <recommendedName>
        <fullName evidence="2">Nonsense-mediated mRNA decay factor SMG8</fullName>
    </recommendedName>
    <alternativeName>
        <fullName>Protein smg-8 homolog</fullName>
    </alternativeName>
</protein>
<feature type="chain" id="PRO_0000378173" description="Nonsense-mediated mRNA decay factor SMG8">
    <location>
        <begin position="1"/>
        <end position="949"/>
    </location>
</feature>
<feature type="region of interest" description="Disordered" evidence="3">
    <location>
        <begin position="564"/>
        <end position="607"/>
    </location>
</feature>
<feature type="region of interest" description="Disordered" evidence="3">
    <location>
        <begin position="624"/>
        <end position="652"/>
    </location>
</feature>
<feature type="region of interest" description="Disordered" evidence="3">
    <location>
        <begin position="748"/>
        <end position="768"/>
    </location>
</feature>
<feature type="compositionally biased region" description="Acidic residues" evidence="3">
    <location>
        <begin position="571"/>
        <end position="581"/>
    </location>
</feature>
<feature type="compositionally biased region" description="Polar residues" evidence="3">
    <location>
        <begin position="594"/>
        <end position="607"/>
    </location>
</feature>
<feature type="compositionally biased region" description="Low complexity" evidence="3">
    <location>
        <begin position="624"/>
        <end position="648"/>
    </location>
</feature>
<feature type="compositionally biased region" description="Basic residues" evidence="3">
    <location>
        <begin position="749"/>
        <end position="768"/>
    </location>
</feature>
<evidence type="ECO:0000250" key="1"/>
<evidence type="ECO:0000250" key="2">
    <source>
        <dbReference type="UniProtKB" id="Q8ND04"/>
    </source>
</evidence>
<evidence type="ECO:0000256" key="3">
    <source>
        <dbReference type="SAM" id="MobiDB-lite"/>
    </source>
</evidence>
<evidence type="ECO:0000305" key="4"/>
<reference key="1">
    <citation type="journal article" date="2007" name="Nature">
        <title>Evolution of genes and genomes on the Drosophila phylogeny.</title>
        <authorList>
            <consortium name="Drosophila 12 genomes consortium"/>
        </authorList>
    </citation>
    <scope>NUCLEOTIDE SEQUENCE [LARGE SCALE GENOMIC DNA]</scope>
    <source>
        <strain>Tucson 14021-0224.01</strain>
    </source>
</reference>
<name>SMG8_DROER</name>